<proteinExistence type="inferred from homology"/>
<sequence>MESKKIAITELLNPSNQENLKEKLQEINKQLISLCSSLPKRNWVPAPSSDILRSLSRTKLDSQEIRLIKTTYRLSTLLSKLQEKDIVFNVVTKDHLLKNGTPYNPYPQPYRGHRFTKENVHTLEAWYSNHIDNPYLDPKSLQSLAQKTNLSKIQIKNWVSNRRRKQKHPPFLLI</sequence>
<accession>Q874N1</accession>
<keyword id="KW-0238">DNA-binding</keyword>
<keyword id="KW-0371">Homeobox</keyword>
<keyword id="KW-0539">Nucleus</keyword>
<keyword id="KW-0678">Repressor</keyword>
<keyword id="KW-0804">Transcription</keyword>
<keyword id="KW-0805">Transcription regulation</keyword>
<protein>
    <recommendedName>
        <fullName>Mating-type protein ALPHA2</fullName>
    </recommendedName>
</protein>
<organism>
    <name type="scientific">Nakaseomyces delphensis</name>
    <name type="common">Yeast</name>
    <name type="synonym">Kluyveromyces delphensis</name>
    <dbReference type="NCBI Taxonomy" id="51657"/>
    <lineage>
        <taxon>Eukaryota</taxon>
        <taxon>Fungi</taxon>
        <taxon>Dikarya</taxon>
        <taxon>Ascomycota</taxon>
        <taxon>Saccharomycotina</taxon>
        <taxon>Saccharomycetes</taxon>
        <taxon>Saccharomycetales</taxon>
        <taxon>Saccharomycetaceae</taxon>
        <taxon>Nakaseomyces</taxon>
    </lineage>
</organism>
<gene>
    <name type="primary">MATALPHA2</name>
    <name type="synonym">ALPHA2</name>
</gene>
<feature type="chain" id="PRO_0000049178" description="Mating-type protein ALPHA2">
    <location>
        <begin position="1"/>
        <end position="174"/>
    </location>
</feature>
<feature type="DNA-binding region" description="Homeobox; TALE-type" evidence="2">
    <location>
        <begin position="108"/>
        <end position="170"/>
    </location>
</feature>
<evidence type="ECO:0000250" key="1"/>
<evidence type="ECO:0000255" key="2">
    <source>
        <dbReference type="PROSITE-ProRule" id="PRU00108"/>
    </source>
</evidence>
<evidence type="ECO:0000305" key="3"/>
<comment type="function">
    <text evidence="1">Mating type proteins are sequence specific DNA-binding proteins that act as master switches in yeast differentiation by controlling gene expression in a cell type-specific fashion. Transcriptional corepressor that acts in conjunction with A1 to repress transcription of haploid-specific genes and of MATALPHA1 (By similarity).</text>
</comment>
<comment type="subunit">
    <text evidence="1">Forms a heterodimer with A1.</text>
</comment>
<comment type="subcellular location">
    <subcellularLocation>
        <location evidence="2">Nucleus</location>
    </subcellularLocation>
</comment>
<comment type="miscellaneous">
    <text>There are three genetic loci for mating type genes in K.delphensis. MAT is the expression locus that determines the mating type of the cell, whereas HML (containing HMLALPHA1 and HMLALPHA2) and HMR (containing HMRA1) represent silenced repositories of mating type information. The mating type is determined by the MAT locus, which contains either a copy of HML or of HMR. Diploid cells are usually heterozygous for the MAT locus.</text>
</comment>
<comment type="similarity">
    <text evidence="3">Belongs to the TALE/M-ATYP homeobox family.</text>
</comment>
<dbReference type="EMBL" id="AY181248">
    <property type="protein sequence ID" value="AAO25604.1"/>
    <property type="molecule type" value="Genomic_DNA"/>
</dbReference>
<dbReference type="SMR" id="Q874N1"/>
<dbReference type="GO" id="GO:0005634">
    <property type="term" value="C:nucleus"/>
    <property type="evidence" value="ECO:0007669"/>
    <property type="project" value="UniProtKB-SubCell"/>
</dbReference>
<dbReference type="GO" id="GO:0003677">
    <property type="term" value="F:DNA binding"/>
    <property type="evidence" value="ECO:0007669"/>
    <property type="project" value="UniProtKB-KW"/>
</dbReference>
<dbReference type="GO" id="GO:0000981">
    <property type="term" value="F:DNA-binding transcription factor activity, RNA polymerase II-specific"/>
    <property type="evidence" value="ECO:0007669"/>
    <property type="project" value="InterPro"/>
</dbReference>
<dbReference type="CDD" id="cd00086">
    <property type="entry name" value="homeodomain"/>
    <property type="match status" value="1"/>
</dbReference>
<dbReference type="Gene3D" id="1.10.10.60">
    <property type="entry name" value="Homeodomain-like"/>
    <property type="match status" value="1"/>
</dbReference>
<dbReference type="InterPro" id="IPR001356">
    <property type="entry name" value="HD"/>
</dbReference>
<dbReference type="InterPro" id="IPR017970">
    <property type="entry name" value="Homeobox_CS"/>
</dbReference>
<dbReference type="InterPro" id="IPR009057">
    <property type="entry name" value="Homeodomain-like_sf"/>
</dbReference>
<dbReference type="InterPro" id="IPR050224">
    <property type="entry name" value="TALE_homeobox"/>
</dbReference>
<dbReference type="PANTHER" id="PTHR11850">
    <property type="entry name" value="HOMEOBOX PROTEIN TRANSCRIPTION FACTORS"/>
    <property type="match status" value="1"/>
</dbReference>
<dbReference type="Pfam" id="PF00046">
    <property type="entry name" value="Homeodomain"/>
    <property type="match status" value="1"/>
</dbReference>
<dbReference type="SMART" id="SM00389">
    <property type="entry name" value="HOX"/>
    <property type="match status" value="1"/>
</dbReference>
<dbReference type="SUPFAM" id="SSF46689">
    <property type="entry name" value="Homeodomain-like"/>
    <property type="match status" value="1"/>
</dbReference>
<dbReference type="PROSITE" id="PS00027">
    <property type="entry name" value="HOMEOBOX_1"/>
    <property type="match status" value="1"/>
</dbReference>
<dbReference type="PROSITE" id="PS50071">
    <property type="entry name" value="HOMEOBOX_2"/>
    <property type="match status" value="1"/>
</dbReference>
<name>MTAL2_NAKDE</name>
<reference key="1">
    <citation type="journal article" date="2003" name="Genome Biol.">
        <title>Evidence from comparative genomics for a complete sexual cycle in the 'asexual' pathogenic yeast Candida glabrata.</title>
        <authorList>
            <person name="Wong S."/>
            <person name="Fares M.A."/>
            <person name="Zimmermann W."/>
            <person name="Butler G."/>
            <person name="Wolfe K.H."/>
        </authorList>
    </citation>
    <scope>NUCLEOTIDE SEQUENCE [GENOMIC DNA]</scope>
    <source>
        <strain>ATCC 24205 / CBS 2170 / NBRC 10602 / NRRL Y-2379 / UCD 56-2</strain>
    </source>
</reference>